<organism>
    <name type="scientific">Geotalea daltonii (strain DSM 22248 / JCM 15807 / FRC-32)</name>
    <name type="common">Geobacter daltonii</name>
    <dbReference type="NCBI Taxonomy" id="316067"/>
    <lineage>
        <taxon>Bacteria</taxon>
        <taxon>Pseudomonadati</taxon>
        <taxon>Thermodesulfobacteriota</taxon>
        <taxon>Desulfuromonadia</taxon>
        <taxon>Geobacterales</taxon>
        <taxon>Geobacteraceae</taxon>
        <taxon>Geotalea</taxon>
    </lineage>
</organism>
<sequence length="267" mass="28613">MVKVAVCGAAGRMGQRIIVAITEAEGAELSGALERPGHPLVGQDAGILAGCGELKVKISDDINAVVEGCDVLIDFTTPKVSLKNLEACALKKKSIVIGSTGFTPEERVLAAELARDIPAVLAPNMSVGVNVCFKVLKDVAKTLGDDFDVEIVELHHNKKKDAPSGTAVRMGEVVAEALGRDYNKVANYHREGICGERTKEEIGMQTVRGGDIIGEHTVYFIGMGERIEISHRAMTRDMFSRGSVRAAKWVVGKKPGLYDMQDVLGLK</sequence>
<name>DAPB_GEODF</name>
<dbReference type="EC" id="1.17.1.8" evidence="1"/>
<dbReference type="EMBL" id="CP001390">
    <property type="protein sequence ID" value="ACM19491.1"/>
    <property type="molecule type" value="Genomic_DNA"/>
</dbReference>
<dbReference type="RefSeq" id="WP_012646220.1">
    <property type="nucleotide sequence ID" value="NC_011979.1"/>
</dbReference>
<dbReference type="SMR" id="B9M381"/>
<dbReference type="STRING" id="316067.Geob_1131"/>
<dbReference type="KEGG" id="geo:Geob_1131"/>
<dbReference type="eggNOG" id="COG0289">
    <property type="taxonomic scope" value="Bacteria"/>
</dbReference>
<dbReference type="HOGENOM" id="CLU_047479_2_1_7"/>
<dbReference type="OrthoDB" id="9790352at2"/>
<dbReference type="UniPathway" id="UPA00034">
    <property type="reaction ID" value="UER00018"/>
</dbReference>
<dbReference type="Proteomes" id="UP000007721">
    <property type="component" value="Chromosome"/>
</dbReference>
<dbReference type="GO" id="GO:0005829">
    <property type="term" value="C:cytosol"/>
    <property type="evidence" value="ECO:0007669"/>
    <property type="project" value="TreeGrafter"/>
</dbReference>
<dbReference type="GO" id="GO:0008839">
    <property type="term" value="F:4-hydroxy-tetrahydrodipicolinate reductase"/>
    <property type="evidence" value="ECO:0007669"/>
    <property type="project" value="UniProtKB-EC"/>
</dbReference>
<dbReference type="GO" id="GO:0051287">
    <property type="term" value="F:NAD binding"/>
    <property type="evidence" value="ECO:0007669"/>
    <property type="project" value="UniProtKB-UniRule"/>
</dbReference>
<dbReference type="GO" id="GO:0050661">
    <property type="term" value="F:NADP binding"/>
    <property type="evidence" value="ECO:0007669"/>
    <property type="project" value="UniProtKB-UniRule"/>
</dbReference>
<dbReference type="GO" id="GO:0016726">
    <property type="term" value="F:oxidoreductase activity, acting on CH or CH2 groups, NAD or NADP as acceptor"/>
    <property type="evidence" value="ECO:0007669"/>
    <property type="project" value="UniProtKB-UniRule"/>
</dbReference>
<dbReference type="GO" id="GO:0019877">
    <property type="term" value="P:diaminopimelate biosynthetic process"/>
    <property type="evidence" value="ECO:0007669"/>
    <property type="project" value="UniProtKB-UniRule"/>
</dbReference>
<dbReference type="GO" id="GO:0009089">
    <property type="term" value="P:lysine biosynthetic process via diaminopimelate"/>
    <property type="evidence" value="ECO:0007669"/>
    <property type="project" value="UniProtKB-UniRule"/>
</dbReference>
<dbReference type="CDD" id="cd02274">
    <property type="entry name" value="DHDPR_N"/>
    <property type="match status" value="1"/>
</dbReference>
<dbReference type="FunFam" id="3.30.360.10:FF:000004">
    <property type="entry name" value="4-hydroxy-tetrahydrodipicolinate reductase"/>
    <property type="match status" value="1"/>
</dbReference>
<dbReference type="FunFam" id="3.40.50.720:FF:000048">
    <property type="entry name" value="4-hydroxy-tetrahydrodipicolinate reductase"/>
    <property type="match status" value="1"/>
</dbReference>
<dbReference type="Gene3D" id="3.30.360.10">
    <property type="entry name" value="Dihydrodipicolinate Reductase, domain 2"/>
    <property type="match status" value="1"/>
</dbReference>
<dbReference type="Gene3D" id="3.40.50.720">
    <property type="entry name" value="NAD(P)-binding Rossmann-like Domain"/>
    <property type="match status" value="1"/>
</dbReference>
<dbReference type="HAMAP" id="MF_00102">
    <property type="entry name" value="DapB"/>
    <property type="match status" value="1"/>
</dbReference>
<dbReference type="InterPro" id="IPR022663">
    <property type="entry name" value="DapB_C"/>
</dbReference>
<dbReference type="InterPro" id="IPR000846">
    <property type="entry name" value="DapB_N"/>
</dbReference>
<dbReference type="InterPro" id="IPR022664">
    <property type="entry name" value="DapB_N_CS"/>
</dbReference>
<dbReference type="InterPro" id="IPR023940">
    <property type="entry name" value="DHDPR_bac"/>
</dbReference>
<dbReference type="InterPro" id="IPR036291">
    <property type="entry name" value="NAD(P)-bd_dom_sf"/>
</dbReference>
<dbReference type="NCBIfam" id="TIGR00036">
    <property type="entry name" value="dapB"/>
    <property type="match status" value="1"/>
</dbReference>
<dbReference type="PANTHER" id="PTHR20836:SF0">
    <property type="entry name" value="4-HYDROXY-TETRAHYDRODIPICOLINATE REDUCTASE 1, CHLOROPLASTIC-RELATED"/>
    <property type="match status" value="1"/>
</dbReference>
<dbReference type="PANTHER" id="PTHR20836">
    <property type="entry name" value="DIHYDRODIPICOLINATE REDUCTASE"/>
    <property type="match status" value="1"/>
</dbReference>
<dbReference type="Pfam" id="PF05173">
    <property type="entry name" value="DapB_C"/>
    <property type="match status" value="1"/>
</dbReference>
<dbReference type="Pfam" id="PF01113">
    <property type="entry name" value="DapB_N"/>
    <property type="match status" value="1"/>
</dbReference>
<dbReference type="PIRSF" id="PIRSF000161">
    <property type="entry name" value="DHPR"/>
    <property type="match status" value="1"/>
</dbReference>
<dbReference type="SUPFAM" id="SSF55347">
    <property type="entry name" value="Glyceraldehyde-3-phosphate dehydrogenase-like, C-terminal domain"/>
    <property type="match status" value="1"/>
</dbReference>
<dbReference type="SUPFAM" id="SSF51735">
    <property type="entry name" value="NAD(P)-binding Rossmann-fold domains"/>
    <property type="match status" value="1"/>
</dbReference>
<dbReference type="PROSITE" id="PS01298">
    <property type="entry name" value="DAPB"/>
    <property type="match status" value="1"/>
</dbReference>
<feature type="chain" id="PRO_1000118856" description="4-hydroxy-tetrahydrodipicolinate reductase">
    <location>
        <begin position="1"/>
        <end position="267"/>
    </location>
</feature>
<feature type="active site" description="Proton donor/acceptor" evidence="1">
    <location>
        <position position="155"/>
    </location>
</feature>
<feature type="active site" description="Proton donor" evidence="1">
    <location>
        <position position="159"/>
    </location>
</feature>
<feature type="binding site" evidence="1">
    <location>
        <begin position="8"/>
        <end position="13"/>
    </location>
    <ligand>
        <name>NAD(+)</name>
        <dbReference type="ChEBI" id="CHEBI:57540"/>
    </ligand>
</feature>
<feature type="binding site" evidence="1">
    <location>
        <position position="34"/>
    </location>
    <ligand>
        <name>NAD(+)</name>
        <dbReference type="ChEBI" id="CHEBI:57540"/>
    </ligand>
</feature>
<feature type="binding site" evidence="1">
    <location>
        <position position="35"/>
    </location>
    <ligand>
        <name>NADP(+)</name>
        <dbReference type="ChEBI" id="CHEBI:58349"/>
    </ligand>
</feature>
<feature type="binding site" evidence="1">
    <location>
        <begin position="98"/>
        <end position="100"/>
    </location>
    <ligand>
        <name>NAD(+)</name>
        <dbReference type="ChEBI" id="CHEBI:57540"/>
    </ligand>
</feature>
<feature type="binding site" evidence="1">
    <location>
        <begin position="122"/>
        <end position="125"/>
    </location>
    <ligand>
        <name>NAD(+)</name>
        <dbReference type="ChEBI" id="CHEBI:57540"/>
    </ligand>
</feature>
<feature type="binding site" evidence="1">
    <location>
        <position position="156"/>
    </location>
    <ligand>
        <name>(S)-2,3,4,5-tetrahydrodipicolinate</name>
        <dbReference type="ChEBI" id="CHEBI:16845"/>
    </ligand>
</feature>
<feature type="binding site" evidence="1">
    <location>
        <begin position="165"/>
        <end position="166"/>
    </location>
    <ligand>
        <name>(S)-2,3,4,5-tetrahydrodipicolinate</name>
        <dbReference type="ChEBI" id="CHEBI:16845"/>
    </ligand>
</feature>
<reference key="1">
    <citation type="submission" date="2009-01" db="EMBL/GenBank/DDBJ databases">
        <title>Complete sequence of Geobacter sp. FRC-32.</title>
        <authorList>
            <consortium name="US DOE Joint Genome Institute"/>
            <person name="Lucas S."/>
            <person name="Copeland A."/>
            <person name="Lapidus A."/>
            <person name="Glavina del Rio T."/>
            <person name="Dalin E."/>
            <person name="Tice H."/>
            <person name="Bruce D."/>
            <person name="Goodwin L."/>
            <person name="Pitluck S."/>
            <person name="Saunders E."/>
            <person name="Brettin T."/>
            <person name="Detter J.C."/>
            <person name="Han C."/>
            <person name="Larimer F."/>
            <person name="Land M."/>
            <person name="Hauser L."/>
            <person name="Kyrpides N."/>
            <person name="Ovchinnikova G."/>
            <person name="Kostka J."/>
            <person name="Richardson P."/>
        </authorList>
    </citation>
    <scope>NUCLEOTIDE SEQUENCE [LARGE SCALE GENOMIC DNA]</scope>
    <source>
        <strain>DSM 22248 / JCM 15807 / FRC-32</strain>
    </source>
</reference>
<protein>
    <recommendedName>
        <fullName evidence="1">4-hydroxy-tetrahydrodipicolinate reductase</fullName>
        <shortName evidence="1">HTPA reductase</shortName>
        <ecNumber evidence="1">1.17.1.8</ecNumber>
    </recommendedName>
</protein>
<comment type="function">
    <text evidence="1">Catalyzes the conversion of 4-hydroxy-tetrahydrodipicolinate (HTPA) to tetrahydrodipicolinate.</text>
</comment>
<comment type="catalytic activity">
    <reaction evidence="1">
        <text>(S)-2,3,4,5-tetrahydrodipicolinate + NAD(+) + H2O = (2S,4S)-4-hydroxy-2,3,4,5-tetrahydrodipicolinate + NADH + H(+)</text>
        <dbReference type="Rhea" id="RHEA:35323"/>
        <dbReference type="ChEBI" id="CHEBI:15377"/>
        <dbReference type="ChEBI" id="CHEBI:15378"/>
        <dbReference type="ChEBI" id="CHEBI:16845"/>
        <dbReference type="ChEBI" id="CHEBI:57540"/>
        <dbReference type="ChEBI" id="CHEBI:57945"/>
        <dbReference type="ChEBI" id="CHEBI:67139"/>
        <dbReference type="EC" id="1.17.1.8"/>
    </reaction>
</comment>
<comment type="catalytic activity">
    <reaction evidence="1">
        <text>(S)-2,3,4,5-tetrahydrodipicolinate + NADP(+) + H2O = (2S,4S)-4-hydroxy-2,3,4,5-tetrahydrodipicolinate + NADPH + H(+)</text>
        <dbReference type="Rhea" id="RHEA:35331"/>
        <dbReference type="ChEBI" id="CHEBI:15377"/>
        <dbReference type="ChEBI" id="CHEBI:15378"/>
        <dbReference type="ChEBI" id="CHEBI:16845"/>
        <dbReference type="ChEBI" id="CHEBI:57783"/>
        <dbReference type="ChEBI" id="CHEBI:58349"/>
        <dbReference type="ChEBI" id="CHEBI:67139"/>
        <dbReference type="EC" id="1.17.1.8"/>
    </reaction>
</comment>
<comment type="pathway">
    <text evidence="1">Amino-acid biosynthesis; L-lysine biosynthesis via DAP pathway; (S)-tetrahydrodipicolinate from L-aspartate: step 4/4.</text>
</comment>
<comment type="subcellular location">
    <subcellularLocation>
        <location evidence="1">Cytoplasm</location>
    </subcellularLocation>
</comment>
<comment type="similarity">
    <text evidence="1">Belongs to the DapB family.</text>
</comment>
<comment type="caution">
    <text evidence="2">Was originally thought to be a dihydrodipicolinate reductase (DHDPR), catalyzing the conversion of dihydrodipicolinate to tetrahydrodipicolinate. However, it was shown in E.coli that the substrate of the enzymatic reaction is not dihydrodipicolinate (DHDP) but in fact (2S,4S)-4-hydroxy-2,3,4,5-tetrahydrodipicolinic acid (HTPA), the product released by the DapA-catalyzed reaction.</text>
</comment>
<accession>B9M381</accession>
<gene>
    <name evidence="1" type="primary">dapB</name>
    <name type="ordered locus">Geob_1131</name>
</gene>
<keyword id="KW-0028">Amino-acid biosynthesis</keyword>
<keyword id="KW-0963">Cytoplasm</keyword>
<keyword id="KW-0220">Diaminopimelate biosynthesis</keyword>
<keyword id="KW-0457">Lysine biosynthesis</keyword>
<keyword id="KW-0520">NAD</keyword>
<keyword id="KW-0521">NADP</keyword>
<keyword id="KW-0560">Oxidoreductase</keyword>
<keyword id="KW-1185">Reference proteome</keyword>
<proteinExistence type="inferred from homology"/>
<evidence type="ECO:0000255" key="1">
    <source>
        <dbReference type="HAMAP-Rule" id="MF_00102"/>
    </source>
</evidence>
<evidence type="ECO:0000305" key="2"/>